<reference key="1">
    <citation type="journal article" date="2007" name="Science">
        <title>Legumes symbioses: absence of nod genes in photosynthetic bradyrhizobia.</title>
        <authorList>
            <person name="Giraud E."/>
            <person name="Moulin L."/>
            <person name="Vallenet D."/>
            <person name="Barbe V."/>
            <person name="Cytryn E."/>
            <person name="Avarre J.-C."/>
            <person name="Jaubert M."/>
            <person name="Simon D."/>
            <person name="Cartieaux F."/>
            <person name="Prin Y."/>
            <person name="Bena G."/>
            <person name="Hannibal L."/>
            <person name="Fardoux J."/>
            <person name="Kojadinovic M."/>
            <person name="Vuillet L."/>
            <person name="Lajus A."/>
            <person name="Cruveiller S."/>
            <person name="Rouy Z."/>
            <person name="Mangenot S."/>
            <person name="Segurens B."/>
            <person name="Dossat C."/>
            <person name="Franck W.L."/>
            <person name="Chang W.-S."/>
            <person name="Saunders E."/>
            <person name="Bruce D."/>
            <person name="Richardson P."/>
            <person name="Normand P."/>
            <person name="Dreyfus B."/>
            <person name="Pignol D."/>
            <person name="Stacey G."/>
            <person name="Emerich D."/>
            <person name="Vermeglio A."/>
            <person name="Medigue C."/>
            <person name="Sadowsky M."/>
        </authorList>
    </citation>
    <scope>NUCLEOTIDE SEQUENCE [LARGE SCALE GENOMIC DNA]</scope>
    <source>
        <strain>BTAi1 / ATCC BAA-1182</strain>
    </source>
</reference>
<feature type="chain" id="PRO_1000052542" description="Large ribosomal subunit protein uL22">
    <location>
        <begin position="1"/>
        <end position="126"/>
    </location>
</feature>
<dbReference type="EMBL" id="CP000494">
    <property type="protein sequence ID" value="ABQ37066.1"/>
    <property type="molecule type" value="Genomic_DNA"/>
</dbReference>
<dbReference type="RefSeq" id="WP_006611843.1">
    <property type="nucleotide sequence ID" value="NC_009485.1"/>
</dbReference>
<dbReference type="SMR" id="A5ELM2"/>
<dbReference type="STRING" id="288000.BBta_5065"/>
<dbReference type="KEGG" id="bbt:BBta_5065"/>
<dbReference type="eggNOG" id="COG0091">
    <property type="taxonomic scope" value="Bacteria"/>
</dbReference>
<dbReference type="HOGENOM" id="CLU_083987_3_0_5"/>
<dbReference type="OrthoDB" id="9805969at2"/>
<dbReference type="Proteomes" id="UP000000246">
    <property type="component" value="Chromosome"/>
</dbReference>
<dbReference type="GO" id="GO:0022625">
    <property type="term" value="C:cytosolic large ribosomal subunit"/>
    <property type="evidence" value="ECO:0007669"/>
    <property type="project" value="TreeGrafter"/>
</dbReference>
<dbReference type="GO" id="GO:0019843">
    <property type="term" value="F:rRNA binding"/>
    <property type="evidence" value="ECO:0007669"/>
    <property type="project" value="UniProtKB-UniRule"/>
</dbReference>
<dbReference type="GO" id="GO:0003735">
    <property type="term" value="F:structural constituent of ribosome"/>
    <property type="evidence" value="ECO:0007669"/>
    <property type="project" value="InterPro"/>
</dbReference>
<dbReference type="GO" id="GO:0006412">
    <property type="term" value="P:translation"/>
    <property type="evidence" value="ECO:0007669"/>
    <property type="project" value="UniProtKB-UniRule"/>
</dbReference>
<dbReference type="CDD" id="cd00336">
    <property type="entry name" value="Ribosomal_L22"/>
    <property type="match status" value="1"/>
</dbReference>
<dbReference type="Gene3D" id="3.90.470.10">
    <property type="entry name" value="Ribosomal protein L22/L17"/>
    <property type="match status" value="1"/>
</dbReference>
<dbReference type="HAMAP" id="MF_01331_B">
    <property type="entry name" value="Ribosomal_uL22_B"/>
    <property type="match status" value="1"/>
</dbReference>
<dbReference type="InterPro" id="IPR001063">
    <property type="entry name" value="Ribosomal_uL22"/>
</dbReference>
<dbReference type="InterPro" id="IPR005727">
    <property type="entry name" value="Ribosomal_uL22_bac/chlpt-type"/>
</dbReference>
<dbReference type="InterPro" id="IPR047867">
    <property type="entry name" value="Ribosomal_uL22_bac/org-type"/>
</dbReference>
<dbReference type="InterPro" id="IPR036394">
    <property type="entry name" value="Ribosomal_uL22_sf"/>
</dbReference>
<dbReference type="NCBIfam" id="TIGR01044">
    <property type="entry name" value="rplV_bact"/>
    <property type="match status" value="1"/>
</dbReference>
<dbReference type="PANTHER" id="PTHR13501">
    <property type="entry name" value="CHLOROPLAST 50S RIBOSOMAL PROTEIN L22-RELATED"/>
    <property type="match status" value="1"/>
</dbReference>
<dbReference type="PANTHER" id="PTHR13501:SF8">
    <property type="entry name" value="LARGE RIBOSOMAL SUBUNIT PROTEIN UL22M"/>
    <property type="match status" value="1"/>
</dbReference>
<dbReference type="Pfam" id="PF00237">
    <property type="entry name" value="Ribosomal_L22"/>
    <property type="match status" value="1"/>
</dbReference>
<dbReference type="SUPFAM" id="SSF54843">
    <property type="entry name" value="Ribosomal protein L22"/>
    <property type="match status" value="1"/>
</dbReference>
<comment type="function">
    <text evidence="1">This protein binds specifically to 23S rRNA; its binding is stimulated by other ribosomal proteins, e.g. L4, L17, and L20. It is important during the early stages of 50S assembly. It makes multiple contacts with different domains of the 23S rRNA in the assembled 50S subunit and ribosome (By similarity).</text>
</comment>
<comment type="function">
    <text evidence="1">The globular domain of the protein is located near the polypeptide exit tunnel on the outside of the subunit, while an extended beta-hairpin is found that lines the wall of the exit tunnel in the center of the 70S ribosome.</text>
</comment>
<comment type="subunit">
    <text evidence="1">Part of the 50S ribosomal subunit.</text>
</comment>
<comment type="similarity">
    <text evidence="1">Belongs to the universal ribosomal protein uL22 family.</text>
</comment>
<evidence type="ECO:0000255" key="1">
    <source>
        <dbReference type="HAMAP-Rule" id="MF_01331"/>
    </source>
</evidence>
<evidence type="ECO:0000305" key="2"/>
<gene>
    <name evidence="1" type="primary">rplV</name>
    <name type="ordered locus">BBta_5065</name>
</gene>
<sequence>MSKPKRERSLPDNEAKAVARMLRVSPQKLNLVAQMIRGRKASAALADLQFSRKRIAVDVKKCLESAIANAENNHELEVDDLVVSQAFVGKGIVMKRFSPRGRGRSGRVFKPFSQLTIIVRQVEASA</sequence>
<accession>A5ELM2</accession>
<organism>
    <name type="scientific">Bradyrhizobium sp. (strain BTAi1 / ATCC BAA-1182)</name>
    <dbReference type="NCBI Taxonomy" id="288000"/>
    <lineage>
        <taxon>Bacteria</taxon>
        <taxon>Pseudomonadati</taxon>
        <taxon>Pseudomonadota</taxon>
        <taxon>Alphaproteobacteria</taxon>
        <taxon>Hyphomicrobiales</taxon>
        <taxon>Nitrobacteraceae</taxon>
        <taxon>Bradyrhizobium</taxon>
    </lineage>
</organism>
<proteinExistence type="inferred from homology"/>
<keyword id="KW-1185">Reference proteome</keyword>
<keyword id="KW-0687">Ribonucleoprotein</keyword>
<keyword id="KW-0689">Ribosomal protein</keyword>
<keyword id="KW-0694">RNA-binding</keyword>
<keyword id="KW-0699">rRNA-binding</keyword>
<protein>
    <recommendedName>
        <fullName evidence="1">Large ribosomal subunit protein uL22</fullName>
    </recommendedName>
    <alternativeName>
        <fullName evidence="2">50S ribosomal protein L22</fullName>
    </alternativeName>
</protein>
<name>RL22_BRASB</name>